<name>COAX_PSYCK</name>
<feature type="chain" id="PRO_0000270893" description="Type III pantothenate kinase">
    <location>
        <begin position="1"/>
        <end position="242"/>
    </location>
</feature>
<feature type="active site" description="Proton acceptor" evidence="1">
    <location>
        <position position="102"/>
    </location>
</feature>
<feature type="binding site" evidence="1">
    <location>
        <begin position="5"/>
        <end position="12"/>
    </location>
    <ligand>
        <name>ATP</name>
        <dbReference type="ChEBI" id="CHEBI:30616"/>
    </ligand>
</feature>
<feature type="binding site" evidence="1">
    <location>
        <position position="94"/>
    </location>
    <ligand>
        <name>substrate</name>
    </ligand>
</feature>
<feature type="binding site" evidence="1">
    <location>
        <begin position="100"/>
        <end position="103"/>
    </location>
    <ligand>
        <name>substrate</name>
    </ligand>
</feature>
<feature type="binding site" evidence="1">
    <location>
        <position position="124"/>
    </location>
    <ligand>
        <name>ATP</name>
        <dbReference type="ChEBI" id="CHEBI:30616"/>
    </ligand>
</feature>
<feature type="binding site" evidence="1">
    <location>
        <position position="175"/>
    </location>
    <ligand>
        <name>substrate</name>
    </ligand>
</feature>
<comment type="function">
    <text evidence="1">Catalyzes the phosphorylation of pantothenate (Pan), the first step in CoA biosynthesis.</text>
</comment>
<comment type="catalytic activity">
    <reaction evidence="1">
        <text>(R)-pantothenate + ATP = (R)-4'-phosphopantothenate + ADP + H(+)</text>
        <dbReference type="Rhea" id="RHEA:16373"/>
        <dbReference type="ChEBI" id="CHEBI:10986"/>
        <dbReference type="ChEBI" id="CHEBI:15378"/>
        <dbReference type="ChEBI" id="CHEBI:29032"/>
        <dbReference type="ChEBI" id="CHEBI:30616"/>
        <dbReference type="ChEBI" id="CHEBI:456216"/>
        <dbReference type="EC" id="2.7.1.33"/>
    </reaction>
</comment>
<comment type="cofactor">
    <cofactor evidence="1">
        <name>NH4(+)</name>
        <dbReference type="ChEBI" id="CHEBI:28938"/>
    </cofactor>
    <cofactor evidence="1">
        <name>K(+)</name>
        <dbReference type="ChEBI" id="CHEBI:29103"/>
    </cofactor>
    <text evidence="1">A monovalent cation. Ammonium or potassium.</text>
</comment>
<comment type="pathway">
    <text evidence="1">Cofactor biosynthesis; coenzyme A biosynthesis; CoA from (R)-pantothenate: step 1/5.</text>
</comment>
<comment type="subunit">
    <text evidence="1">Homodimer.</text>
</comment>
<comment type="subcellular location">
    <subcellularLocation>
        <location evidence="1">Cytoplasm</location>
    </subcellularLocation>
</comment>
<comment type="similarity">
    <text evidence="1">Belongs to the type III pantothenate kinase family.</text>
</comment>
<organism>
    <name type="scientific">Psychrobacter cryohalolentis (strain ATCC BAA-1226 / DSM 17306 / VKM B-2378 / K5)</name>
    <dbReference type="NCBI Taxonomy" id="335284"/>
    <lineage>
        <taxon>Bacteria</taxon>
        <taxon>Pseudomonadati</taxon>
        <taxon>Pseudomonadota</taxon>
        <taxon>Gammaproteobacteria</taxon>
        <taxon>Moraxellales</taxon>
        <taxon>Moraxellaceae</taxon>
        <taxon>Psychrobacter</taxon>
    </lineage>
</organism>
<keyword id="KW-0067">ATP-binding</keyword>
<keyword id="KW-0173">Coenzyme A biosynthesis</keyword>
<keyword id="KW-0963">Cytoplasm</keyword>
<keyword id="KW-0418">Kinase</keyword>
<keyword id="KW-0547">Nucleotide-binding</keyword>
<keyword id="KW-0630">Potassium</keyword>
<keyword id="KW-0808">Transferase</keyword>
<sequence>MLWLDLGNTRLKYWLTDDIGQIVSHDAKQHLQAPAELLMGLIDRFERYAPDFIGISSVLGDDLNIKVSETLSRLNIPFEFVHVDANYPLMKSAYNDEQLGCDRWLQMLGAVDRTKRQCVIGCGTAVTIDLIDHAEHLGGYIFPSIYLQRESLFSGTKQITISNGTFDNVSQGLTTQDAVHRGILLSIVGAINEISTRHPNFEVIMTGGDAAIIAQHVNRPVRLRDDLLLNGLARYFDHSKQA</sequence>
<dbReference type="EC" id="2.7.1.33" evidence="1"/>
<dbReference type="EMBL" id="CP000323">
    <property type="protein sequence ID" value="ABE74129.1"/>
    <property type="molecule type" value="Genomic_DNA"/>
</dbReference>
<dbReference type="RefSeq" id="WP_011512715.1">
    <property type="nucleotide sequence ID" value="NC_007969.1"/>
</dbReference>
<dbReference type="SMR" id="Q1QDX4"/>
<dbReference type="STRING" id="335284.Pcryo_0345"/>
<dbReference type="KEGG" id="pcr:Pcryo_0345"/>
<dbReference type="eggNOG" id="COG1521">
    <property type="taxonomic scope" value="Bacteria"/>
</dbReference>
<dbReference type="HOGENOM" id="CLU_066627_0_1_6"/>
<dbReference type="UniPathway" id="UPA00241">
    <property type="reaction ID" value="UER00352"/>
</dbReference>
<dbReference type="Proteomes" id="UP000002425">
    <property type="component" value="Chromosome"/>
</dbReference>
<dbReference type="GO" id="GO:0005737">
    <property type="term" value="C:cytoplasm"/>
    <property type="evidence" value="ECO:0007669"/>
    <property type="project" value="UniProtKB-SubCell"/>
</dbReference>
<dbReference type="GO" id="GO:0005524">
    <property type="term" value="F:ATP binding"/>
    <property type="evidence" value="ECO:0007669"/>
    <property type="project" value="UniProtKB-UniRule"/>
</dbReference>
<dbReference type="GO" id="GO:0004594">
    <property type="term" value="F:pantothenate kinase activity"/>
    <property type="evidence" value="ECO:0007669"/>
    <property type="project" value="UniProtKB-UniRule"/>
</dbReference>
<dbReference type="GO" id="GO:0015937">
    <property type="term" value="P:coenzyme A biosynthetic process"/>
    <property type="evidence" value="ECO:0007669"/>
    <property type="project" value="UniProtKB-UniRule"/>
</dbReference>
<dbReference type="CDD" id="cd24015">
    <property type="entry name" value="ASKHA_NBD_PanK-III"/>
    <property type="match status" value="1"/>
</dbReference>
<dbReference type="Gene3D" id="3.30.420.40">
    <property type="match status" value="2"/>
</dbReference>
<dbReference type="HAMAP" id="MF_01274">
    <property type="entry name" value="Pantothen_kinase_3"/>
    <property type="match status" value="1"/>
</dbReference>
<dbReference type="InterPro" id="IPR043129">
    <property type="entry name" value="ATPase_NBD"/>
</dbReference>
<dbReference type="InterPro" id="IPR004619">
    <property type="entry name" value="Type_III_PanK"/>
</dbReference>
<dbReference type="NCBIfam" id="TIGR00671">
    <property type="entry name" value="baf"/>
    <property type="match status" value="1"/>
</dbReference>
<dbReference type="NCBIfam" id="NF009858">
    <property type="entry name" value="PRK13322.1-3"/>
    <property type="match status" value="1"/>
</dbReference>
<dbReference type="PANTHER" id="PTHR34265">
    <property type="entry name" value="TYPE III PANTOTHENATE KINASE"/>
    <property type="match status" value="1"/>
</dbReference>
<dbReference type="PANTHER" id="PTHR34265:SF1">
    <property type="entry name" value="TYPE III PANTOTHENATE KINASE"/>
    <property type="match status" value="1"/>
</dbReference>
<dbReference type="Pfam" id="PF03309">
    <property type="entry name" value="Pan_kinase"/>
    <property type="match status" value="1"/>
</dbReference>
<dbReference type="SUPFAM" id="SSF53067">
    <property type="entry name" value="Actin-like ATPase domain"/>
    <property type="match status" value="2"/>
</dbReference>
<accession>Q1QDX4</accession>
<reference key="1">
    <citation type="submission" date="2006-03" db="EMBL/GenBank/DDBJ databases">
        <title>Complete sequence of chromosome of Psychrobacter cryohalolentis K5.</title>
        <authorList>
            <consortium name="US DOE Joint Genome Institute"/>
            <person name="Copeland A."/>
            <person name="Lucas S."/>
            <person name="Lapidus A."/>
            <person name="Barry K."/>
            <person name="Detter J.C."/>
            <person name="Glavina T."/>
            <person name="Hammon N."/>
            <person name="Israni S."/>
            <person name="Dalin E."/>
            <person name="Tice H."/>
            <person name="Pitluck S."/>
            <person name="Brettin T."/>
            <person name="Bruce D."/>
            <person name="Han C."/>
            <person name="Tapia R."/>
            <person name="Sims D.R."/>
            <person name="Gilna P."/>
            <person name="Schmutz J."/>
            <person name="Larimer F."/>
            <person name="Land M."/>
            <person name="Hauser L."/>
            <person name="Kyrpides N."/>
            <person name="Kim E."/>
            <person name="Richardson P."/>
        </authorList>
    </citation>
    <scope>NUCLEOTIDE SEQUENCE [LARGE SCALE GENOMIC DNA]</scope>
    <source>
        <strain>ATCC BAA-1226 / DSM 17306 / VKM B-2378 / K5</strain>
    </source>
</reference>
<evidence type="ECO:0000255" key="1">
    <source>
        <dbReference type="HAMAP-Rule" id="MF_01274"/>
    </source>
</evidence>
<proteinExistence type="inferred from homology"/>
<protein>
    <recommendedName>
        <fullName evidence="1">Type III pantothenate kinase</fullName>
        <ecNumber evidence="1">2.7.1.33</ecNumber>
    </recommendedName>
    <alternativeName>
        <fullName evidence="1">PanK-III</fullName>
    </alternativeName>
    <alternativeName>
        <fullName evidence="1">Pantothenic acid kinase</fullName>
    </alternativeName>
</protein>
<gene>
    <name evidence="1" type="primary">coaX</name>
    <name type="ordered locus">Pcryo_0345</name>
</gene>